<comment type="function">
    <text evidence="1">Involved in cell division and chromosome segregation.</text>
</comment>
<comment type="similarity">
    <text evidence="1">Belongs to the WhiA family.</text>
</comment>
<evidence type="ECO:0000255" key="1">
    <source>
        <dbReference type="HAMAP-Rule" id="MF_01420"/>
    </source>
</evidence>
<proteinExistence type="inferred from homology"/>
<dbReference type="EMBL" id="CP001186">
    <property type="protein sequence ID" value="ACK95890.1"/>
    <property type="molecule type" value="Genomic_DNA"/>
</dbReference>
<dbReference type="RefSeq" id="WP_000006563.1">
    <property type="nucleotide sequence ID" value="NC_011772.1"/>
</dbReference>
<dbReference type="SMR" id="B7IPR7"/>
<dbReference type="GeneID" id="83638827"/>
<dbReference type="KEGG" id="bcg:BCG9842_B5685"/>
<dbReference type="HOGENOM" id="CLU_053282_0_0_9"/>
<dbReference type="Proteomes" id="UP000006744">
    <property type="component" value="Chromosome"/>
</dbReference>
<dbReference type="GO" id="GO:0003677">
    <property type="term" value="F:DNA binding"/>
    <property type="evidence" value="ECO:0007669"/>
    <property type="project" value="UniProtKB-UniRule"/>
</dbReference>
<dbReference type="GO" id="GO:0051301">
    <property type="term" value="P:cell division"/>
    <property type="evidence" value="ECO:0007669"/>
    <property type="project" value="UniProtKB-UniRule"/>
</dbReference>
<dbReference type="GO" id="GO:0043937">
    <property type="term" value="P:regulation of sporulation"/>
    <property type="evidence" value="ECO:0007669"/>
    <property type="project" value="InterPro"/>
</dbReference>
<dbReference type="FunFam" id="3.10.28.10:FF:000002">
    <property type="entry name" value="Probable cell division protein WhiA"/>
    <property type="match status" value="1"/>
</dbReference>
<dbReference type="Gene3D" id="3.10.28.10">
    <property type="entry name" value="Homing endonucleases"/>
    <property type="match status" value="1"/>
</dbReference>
<dbReference type="HAMAP" id="MF_01420">
    <property type="entry name" value="HTH_type_WhiA"/>
    <property type="match status" value="1"/>
</dbReference>
<dbReference type="InterPro" id="IPR027434">
    <property type="entry name" value="Homing_endonucl"/>
</dbReference>
<dbReference type="InterPro" id="IPR018478">
    <property type="entry name" value="Sporu_reg_WhiA_N_dom"/>
</dbReference>
<dbReference type="InterPro" id="IPR003802">
    <property type="entry name" value="Sporulation_regulator_WhiA"/>
</dbReference>
<dbReference type="InterPro" id="IPR023054">
    <property type="entry name" value="Sporulation_regulator_WhiA_C"/>
</dbReference>
<dbReference type="InterPro" id="IPR039518">
    <property type="entry name" value="WhiA_LAGLIDADG_dom"/>
</dbReference>
<dbReference type="NCBIfam" id="TIGR00647">
    <property type="entry name" value="DNA_bind_WhiA"/>
    <property type="match status" value="1"/>
</dbReference>
<dbReference type="PANTHER" id="PTHR37307">
    <property type="entry name" value="CELL DIVISION PROTEIN WHIA-RELATED"/>
    <property type="match status" value="1"/>
</dbReference>
<dbReference type="PANTHER" id="PTHR37307:SF1">
    <property type="entry name" value="CELL DIVISION PROTEIN WHIA-RELATED"/>
    <property type="match status" value="1"/>
</dbReference>
<dbReference type="Pfam" id="PF02650">
    <property type="entry name" value="HTH_WhiA"/>
    <property type="match status" value="1"/>
</dbReference>
<dbReference type="Pfam" id="PF14527">
    <property type="entry name" value="LAGLIDADG_WhiA"/>
    <property type="match status" value="1"/>
</dbReference>
<dbReference type="Pfam" id="PF10298">
    <property type="entry name" value="WhiA_N"/>
    <property type="match status" value="1"/>
</dbReference>
<dbReference type="SUPFAM" id="SSF55608">
    <property type="entry name" value="Homing endonucleases"/>
    <property type="match status" value="1"/>
</dbReference>
<feature type="chain" id="PRO_0000376434" description="Probable cell division protein WhiA">
    <location>
        <begin position="1"/>
        <end position="316"/>
    </location>
</feature>
<feature type="DNA-binding region" description="H-T-H motif" evidence="1">
    <location>
        <begin position="275"/>
        <end position="309"/>
    </location>
</feature>
<keyword id="KW-0131">Cell cycle</keyword>
<keyword id="KW-0132">Cell division</keyword>
<keyword id="KW-0238">DNA-binding</keyword>
<reference key="1">
    <citation type="submission" date="2008-10" db="EMBL/GenBank/DDBJ databases">
        <title>Genome sequence of Bacillus cereus G9842.</title>
        <authorList>
            <person name="Dodson R.J."/>
            <person name="Durkin A.S."/>
            <person name="Rosovitz M.J."/>
            <person name="Rasko D.A."/>
            <person name="Hoffmaster A."/>
            <person name="Ravel J."/>
            <person name="Sutton G."/>
        </authorList>
    </citation>
    <scope>NUCLEOTIDE SEQUENCE [LARGE SCALE GENOMIC DNA]</scope>
    <source>
        <strain>G9842</strain>
    </source>
</reference>
<sequence length="316" mass="36380">MSFASETKKELTNLEMKECCEKAELSALLRMNGSLSFSNRRLSIDIQTENAAIARRIYTLLKKGYDVTVELLVRKKMRLKKNNVYIVRLVEKSREILADLHIVRDDFSFIRNISQELIEKKCCKRSYLRGAFLAGGSVNNPETSSYHLEIFSLYKEHNDAICELMNGFDLNSKTLERRKGYITYLKEAEKITEFLNIIGAHNALLRFEDIRIVRDMRNSVNRLVNCETANLNKTIGAALRQIENIRYIDETVGLDILPDKLREIAQLRRDYQDVTLKELGEMVSGGKISKSGINHRLRKIDEIAEKLRAGETVAKK</sequence>
<name>WHIA_BACC2</name>
<accession>B7IPR7</accession>
<gene>
    <name evidence="1" type="primary">whiA</name>
    <name type="ordered locus">BCG9842_B5685</name>
</gene>
<protein>
    <recommendedName>
        <fullName evidence="1">Probable cell division protein WhiA</fullName>
    </recommendedName>
</protein>
<organism>
    <name type="scientific">Bacillus cereus (strain G9842)</name>
    <dbReference type="NCBI Taxonomy" id="405531"/>
    <lineage>
        <taxon>Bacteria</taxon>
        <taxon>Bacillati</taxon>
        <taxon>Bacillota</taxon>
        <taxon>Bacilli</taxon>
        <taxon>Bacillales</taxon>
        <taxon>Bacillaceae</taxon>
        <taxon>Bacillus</taxon>
        <taxon>Bacillus cereus group</taxon>
    </lineage>
</organism>